<comment type="function">
    <text evidence="1">An essential GTPase that binds both GDP and GTP, with rapid nucleotide exchange. Plays a role in 16S rRNA processing and 30S ribosomal subunit biogenesis and possibly also in cell cycle regulation and energy metabolism.</text>
</comment>
<comment type="subunit">
    <text evidence="1">Monomer.</text>
</comment>
<comment type="subcellular location">
    <subcellularLocation>
        <location>Cytoplasm</location>
    </subcellularLocation>
    <subcellularLocation>
        <location evidence="1">Cell inner membrane</location>
        <topology evidence="1">Peripheral membrane protein</topology>
    </subcellularLocation>
</comment>
<comment type="similarity">
    <text evidence="1 2">Belongs to the TRAFAC class TrmE-Era-EngA-EngB-Septin-like GTPase superfamily. Era GTPase family.</text>
</comment>
<organism>
    <name type="scientific">Pseudomonas aeruginosa (strain UCBPP-PA14)</name>
    <dbReference type="NCBI Taxonomy" id="208963"/>
    <lineage>
        <taxon>Bacteria</taxon>
        <taxon>Pseudomonadati</taxon>
        <taxon>Pseudomonadota</taxon>
        <taxon>Gammaproteobacteria</taxon>
        <taxon>Pseudomonadales</taxon>
        <taxon>Pseudomonadaceae</taxon>
        <taxon>Pseudomonas</taxon>
    </lineage>
</organism>
<keyword id="KW-0997">Cell inner membrane</keyword>
<keyword id="KW-1003">Cell membrane</keyword>
<keyword id="KW-0963">Cytoplasm</keyword>
<keyword id="KW-0342">GTP-binding</keyword>
<keyword id="KW-0472">Membrane</keyword>
<keyword id="KW-0547">Nucleotide-binding</keyword>
<keyword id="KW-0690">Ribosome biogenesis</keyword>
<keyword id="KW-0694">RNA-binding</keyword>
<keyword id="KW-0699">rRNA-binding</keyword>
<gene>
    <name evidence="1" type="primary">era</name>
    <name type="ordered locus">PA14_54320</name>
</gene>
<proteinExistence type="inferred from homology"/>
<sequence>MTDMHDDIPAGSRCGYVAIVGRPNVGKSTLLNHILGQKLAITSRKPQTTRHNMLGIKTEGEVQAVYVDTPGLHKSGEKALNRYMNRTASAALKDVDVVIFVVDRTRWTEEDQMVLERVQYVSCPVLIAVNKTDRIEEKADLLPHLEWLTQQLPKAEVVPISAQHGTNLDVLEKLVAERLPESEHFFPEDQITDRSSRFLAAELVREKIMRQLGAELPYQITVEIEEFKQEGRILHIHALILVEREGQKKIIIGDKGERIKSIGQNARKDMEVLFDSKVMLNLWVKVKGGWSDDERALRSLGYGDL</sequence>
<dbReference type="EMBL" id="CP000438">
    <property type="protein sequence ID" value="ABJ09923.1"/>
    <property type="molecule type" value="Genomic_DNA"/>
</dbReference>
<dbReference type="RefSeq" id="WP_003085566.1">
    <property type="nucleotide sequence ID" value="NZ_CP034244.1"/>
</dbReference>
<dbReference type="SMR" id="Q02HS3"/>
<dbReference type="KEGG" id="pau:PA14_54320"/>
<dbReference type="PseudoCAP" id="PA14_54320"/>
<dbReference type="HOGENOM" id="CLU_038009_1_2_6"/>
<dbReference type="BioCyc" id="PAER208963:G1G74-4573-MONOMER"/>
<dbReference type="Proteomes" id="UP000000653">
    <property type="component" value="Chromosome"/>
</dbReference>
<dbReference type="GO" id="GO:0005829">
    <property type="term" value="C:cytosol"/>
    <property type="evidence" value="ECO:0007669"/>
    <property type="project" value="TreeGrafter"/>
</dbReference>
<dbReference type="GO" id="GO:0005886">
    <property type="term" value="C:plasma membrane"/>
    <property type="evidence" value="ECO:0007669"/>
    <property type="project" value="UniProtKB-SubCell"/>
</dbReference>
<dbReference type="GO" id="GO:0005525">
    <property type="term" value="F:GTP binding"/>
    <property type="evidence" value="ECO:0007669"/>
    <property type="project" value="UniProtKB-UniRule"/>
</dbReference>
<dbReference type="GO" id="GO:0003924">
    <property type="term" value="F:GTPase activity"/>
    <property type="evidence" value="ECO:0007669"/>
    <property type="project" value="UniProtKB-UniRule"/>
</dbReference>
<dbReference type="GO" id="GO:0043024">
    <property type="term" value="F:ribosomal small subunit binding"/>
    <property type="evidence" value="ECO:0007669"/>
    <property type="project" value="TreeGrafter"/>
</dbReference>
<dbReference type="GO" id="GO:0070181">
    <property type="term" value="F:small ribosomal subunit rRNA binding"/>
    <property type="evidence" value="ECO:0007669"/>
    <property type="project" value="UniProtKB-UniRule"/>
</dbReference>
<dbReference type="GO" id="GO:0000028">
    <property type="term" value="P:ribosomal small subunit assembly"/>
    <property type="evidence" value="ECO:0007669"/>
    <property type="project" value="TreeGrafter"/>
</dbReference>
<dbReference type="CDD" id="cd04163">
    <property type="entry name" value="Era"/>
    <property type="match status" value="1"/>
</dbReference>
<dbReference type="CDD" id="cd22534">
    <property type="entry name" value="KH-II_Era"/>
    <property type="match status" value="1"/>
</dbReference>
<dbReference type="FunFam" id="3.30.300.20:FF:000003">
    <property type="entry name" value="GTPase Era"/>
    <property type="match status" value="1"/>
</dbReference>
<dbReference type="FunFam" id="3.40.50.300:FF:000094">
    <property type="entry name" value="GTPase Era"/>
    <property type="match status" value="1"/>
</dbReference>
<dbReference type="Gene3D" id="3.30.300.20">
    <property type="match status" value="1"/>
</dbReference>
<dbReference type="Gene3D" id="3.40.50.300">
    <property type="entry name" value="P-loop containing nucleotide triphosphate hydrolases"/>
    <property type="match status" value="1"/>
</dbReference>
<dbReference type="HAMAP" id="MF_00367">
    <property type="entry name" value="GTPase_Era"/>
    <property type="match status" value="1"/>
</dbReference>
<dbReference type="InterPro" id="IPR030388">
    <property type="entry name" value="G_ERA_dom"/>
</dbReference>
<dbReference type="InterPro" id="IPR006073">
    <property type="entry name" value="GTP-bd"/>
</dbReference>
<dbReference type="InterPro" id="IPR005662">
    <property type="entry name" value="GTPase_Era-like"/>
</dbReference>
<dbReference type="InterPro" id="IPR015946">
    <property type="entry name" value="KH_dom-like_a/b"/>
</dbReference>
<dbReference type="InterPro" id="IPR004044">
    <property type="entry name" value="KH_dom_type_2"/>
</dbReference>
<dbReference type="InterPro" id="IPR009019">
    <property type="entry name" value="KH_sf_prok-type"/>
</dbReference>
<dbReference type="InterPro" id="IPR027417">
    <property type="entry name" value="P-loop_NTPase"/>
</dbReference>
<dbReference type="InterPro" id="IPR005225">
    <property type="entry name" value="Small_GTP-bd"/>
</dbReference>
<dbReference type="NCBIfam" id="TIGR00436">
    <property type="entry name" value="era"/>
    <property type="match status" value="1"/>
</dbReference>
<dbReference type="NCBIfam" id="NF000908">
    <property type="entry name" value="PRK00089.1"/>
    <property type="match status" value="1"/>
</dbReference>
<dbReference type="NCBIfam" id="TIGR00231">
    <property type="entry name" value="small_GTP"/>
    <property type="match status" value="1"/>
</dbReference>
<dbReference type="PANTHER" id="PTHR42698">
    <property type="entry name" value="GTPASE ERA"/>
    <property type="match status" value="1"/>
</dbReference>
<dbReference type="PANTHER" id="PTHR42698:SF1">
    <property type="entry name" value="GTPASE ERA, MITOCHONDRIAL"/>
    <property type="match status" value="1"/>
</dbReference>
<dbReference type="Pfam" id="PF07650">
    <property type="entry name" value="KH_2"/>
    <property type="match status" value="1"/>
</dbReference>
<dbReference type="Pfam" id="PF01926">
    <property type="entry name" value="MMR_HSR1"/>
    <property type="match status" value="1"/>
</dbReference>
<dbReference type="PRINTS" id="PR00326">
    <property type="entry name" value="GTP1OBG"/>
</dbReference>
<dbReference type="SUPFAM" id="SSF52540">
    <property type="entry name" value="P-loop containing nucleoside triphosphate hydrolases"/>
    <property type="match status" value="1"/>
</dbReference>
<dbReference type="SUPFAM" id="SSF54814">
    <property type="entry name" value="Prokaryotic type KH domain (KH-domain type II)"/>
    <property type="match status" value="1"/>
</dbReference>
<dbReference type="PROSITE" id="PS51713">
    <property type="entry name" value="G_ERA"/>
    <property type="match status" value="1"/>
</dbReference>
<dbReference type="PROSITE" id="PS50823">
    <property type="entry name" value="KH_TYPE_2"/>
    <property type="match status" value="1"/>
</dbReference>
<accession>Q02HS3</accession>
<protein>
    <recommendedName>
        <fullName evidence="1">GTPase Era</fullName>
    </recommendedName>
</protein>
<feature type="chain" id="PRO_1000079719" description="GTPase Era">
    <location>
        <begin position="1"/>
        <end position="305"/>
    </location>
</feature>
<feature type="domain" description="Era-type G" evidence="2">
    <location>
        <begin position="13"/>
        <end position="181"/>
    </location>
</feature>
<feature type="domain" description="KH type-2" evidence="1">
    <location>
        <begin position="204"/>
        <end position="288"/>
    </location>
</feature>
<feature type="region of interest" description="G1" evidence="2">
    <location>
        <begin position="21"/>
        <end position="28"/>
    </location>
</feature>
<feature type="region of interest" description="G2" evidence="2">
    <location>
        <begin position="47"/>
        <end position="51"/>
    </location>
</feature>
<feature type="region of interest" description="G3" evidence="2">
    <location>
        <begin position="68"/>
        <end position="71"/>
    </location>
</feature>
<feature type="region of interest" description="G4" evidence="2">
    <location>
        <begin position="130"/>
        <end position="133"/>
    </location>
</feature>
<feature type="region of interest" description="G5" evidence="2">
    <location>
        <begin position="160"/>
        <end position="162"/>
    </location>
</feature>
<feature type="binding site" evidence="1">
    <location>
        <begin position="21"/>
        <end position="28"/>
    </location>
    <ligand>
        <name>GTP</name>
        <dbReference type="ChEBI" id="CHEBI:37565"/>
    </ligand>
</feature>
<feature type="binding site" evidence="1">
    <location>
        <begin position="68"/>
        <end position="72"/>
    </location>
    <ligand>
        <name>GTP</name>
        <dbReference type="ChEBI" id="CHEBI:37565"/>
    </ligand>
</feature>
<feature type="binding site" evidence="1">
    <location>
        <begin position="130"/>
        <end position="133"/>
    </location>
    <ligand>
        <name>GTP</name>
        <dbReference type="ChEBI" id="CHEBI:37565"/>
    </ligand>
</feature>
<name>ERA_PSEAB</name>
<evidence type="ECO:0000255" key="1">
    <source>
        <dbReference type="HAMAP-Rule" id="MF_00367"/>
    </source>
</evidence>
<evidence type="ECO:0000255" key="2">
    <source>
        <dbReference type="PROSITE-ProRule" id="PRU01050"/>
    </source>
</evidence>
<reference key="1">
    <citation type="journal article" date="2006" name="Genome Biol.">
        <title>Genomic analysis reveals that Pseudomonas aeruginosa virulence is combinatorial.</title>
        <authorList>
            <person name="Lee D.G."/>
            <person name="Urbach J.M."/>
            <person name="Wu G."/>
            <person name="Liberati N.T."/>
            <person name="Feinbaum R.L."/>
            <person name="Miyata S."/>
            <person name="Diggins L.T."/>
            <person name="He J."/>
            <person name="Saucier M."/>
            <person name="Deziel E."/>
            <person name="Friedman L."/>
            <person name="Li L."/>
            <person name="Grills G."/>
            <person name="Montgomery K."/>
            <person name="Kucherlapati R."/>
            <person name="Rahme L.G."/>
            <person name="Ausubel F.M."/>
        </authorList>
    </citation>
    <scope>NUCLEOTIDE SEQUENCE [LARGE SCALE GENOMIC DNA]</scope>
    <source>
        <strain>UCBPP-PA14</strain>
    </source>
</reference>